<organism>
    <name type="scientific">Xylella fastidiosa (strain M12)</name>
    <dbReference type="NCBI Taxonomy" id="405440"/>
    <lineage>
        <taxon>Bacteria</taxon>
        <taxon>Pseudomonadati</taxon>
        <taxon>Pseudomonadota</taxon>
        <taxon>Gammaproteobacteria</taxon>
        <taxon>Lysobacterales</taxon>
        <taxon>Lysobacteraceae</taxon>
        <taxon>Xylella</taxon>
    </lineage>
</organism>
<keyword id="KW-0687">Ribonucleoprotein</keyword>
<keyword id="KW-0689">Ribosomal protein</keyword>
<sequence>MPKMKTNRAAAKRFRKTASGKYKAGHANRSHILTKKATKRKRNLRQQNHVRAEDAGRLDRMLPYL</sequence>
<proteinExistence type="inferred from homology"/>
<accession>B0U5E1</accession>
<name>RL35_XYLFM</name>
<protein>
    <recommendedName>
        <fullName evidence="1">Large ribosomal subunit protein bL35</fullName>
    </recommendedName>
    <alternativeName>
        <fullName evidence="3">50S ribosomal protein L35</fullName>
    </alternativeName>
</protein>
<dbReference type="EMBL" id="CP000941">
    <property type="protein sequence ID" value="ACA12959.1"/>
    <property type="molecule type" value="Genomic_DNA"/>
</dbReference>
<dbReference type="RefSeq" id="WP_004084576.1">
    <property type="nucleotide sequence ID" value="NC_010513.1"/>
</dbReference>
<dbReference type="SMR" id="B0U5E1"/>
<dbReference type="KEGG" id="xfm:Xfasm12_2097"/>
<dbReference type="HOGENOM" id="CLU_169643_4_3_6"/>
<dbReference type="GO" id="GO:0022625">
    <property type="term" value="C:cytosolic large ribosomal subunit"/>
    <property type="evidence" value="ECO:0007669"/>
    <property type="project" value="TreeGrafter"/>
</dbReference>
<dbReference type="GO" id="GO:0003735">
    <property type="term" value="F:structural constituent of ribosome"/>
    <property type="evidence" value="ECO:0007669"/>
    <property type="project" value="InterPro"/>
</dbReference>
<dbReference type="GO" id="GO:0006412">
    <property type="term" value="P:translation"/>
    <property type="evidence" value="ECO:0007669"/>
    <property type="project" value="UniProtKB-UniRule"/>
</dbReference>
<dbReference type="FunFam" id="4.10.410.60:FF:000001">
    <property type="entry name" value="50S ribosomal protein L35"/>
    <property type="match status" value="1"/>
</dbReference>
<dbReference type="Gene3D" id="4.10.410.60">
    <property type="match status" value="1"/>
</dbReference>
<dbReference type="HAMAP" id="MF_00514">
    <property type="entry name" value="Ribosomal_bL35"/>
    <property type="match status" value="1"/>
</dbReference>
<dbReference type="InterPro" id="IPR001706">
    <property type="entry name" value="Ribosomal_bL35"/>
</dbReference>
<dbReference type="InterPro" id="IPR021137">
    <property type="entry name" value="Ribosomal_bL35-like"/>
</dbReference>
<dbReference type="InterPro" id="IPR018265">
    <property type="entry name" value="Ribosomal_bL35_CS"/>
</dbReference>
<dbReference type="InterPro" id="IPR037229">
    <property type="entry name" value="Ribosomal_bL35_sf"/>
</dbReference>
<dbReference type="NCBIfam" id="TIGR00001">
    <property type="entry name" value="rpmI_bact"/>
    <property type="match status" value="1"/>
</dbReference>
<dbReference type="PANTHER" id="PTHR33343">
    <property type="entry name" value="54S RIBOSOMAL PROTEIN BL35M"/>
    <property type="match status" value="1"/>
</dbReference>
<dbReference type="PANTHER" id="PTHR33343:SF1">
    <property type="entry name" value="LARGE RIBOSOMAL SUBUNIT PROTEIN BL35M"/>
    <property type="match status" value="1"/>
</dbReference>
<dbReference type="Pfam" id="PF01632">
    <property type="entry name" value="Ribosomal_L35p"/>
    <property type="match status" value="1"/>
</dbReference>
<dbReference type="PRINTS" id="PR00064">
    <property type="entry name" value="RIBOSOMALL35"/>
</dbReference>
<dbReference type="SUPFAM" id="SSF143034">
    <property type="entry name" value="L35p-like"/>
    <property type="match status" value="1"/>
</dbReference>
<dbReference type="PROSITE" id="PS00936">
    <property type="entry name" value="RIBOSOMAL_L35"/>
    <property type="match status" value="1"/>
</dbReference>
<reference key="1">
    <citation type="journal article" date="2010" name="J. Bacteriol.">
        <title>Whole genome sequences of two Xylella fastidiosa strains (M12 and M23) causing almond leaf scorch disease in California.</title>
        <authorList>
            <person name="Chen J."/>
            <person name="Xie G."/>
            <person name="Han S."/>
            <person name="Chertkov O."/>
            <person name="Sims D."/>
            <person name="Civerolo E.L."/>
        </authorList>
    </citation>
    <scope>NUCLEOTIDE SEQUENCE [LARGE SCALE GENOMIC DNA]</scope>
    <source>
        <strain>M12</strain>
    </source>
</reference>
<evidence type="ECO:0000255" key="1">
    <source>
        <dbReference type="HAMAP-Rule" id="MF_00514"/>
    </source>
</evidence>
<evidence type="ECO:0000256" key="2">
    <source>
        <dbReference type="SAM" id="MobiDB-lite"/>
    </source>
</evidence>
<evidence type="ECO:0000305" key="3"/>
<comment type="similarity">
    <text evidence="1">Belongs to the bacterial ribosomal protein bL35 family.</text>
</comment>
<feature type="chain" id="PRO_1000127430" description="Large ribosomal subunit protein bL35">
    <location>
        <begin position="1"/>
        <end position="65"/>
    </location>
</feature>
<feature type="region of interest" description="Disordered" evidence="2">
    <location>
        <begin position="1"/>
        <end position="65"/>
    </location>
</feature>
<feature type="compositionally biased region" description="Basic residues" evidence="2">
    <location>
        <begin position="10"/>
        <end position="44"/>
    </location>
</feature>
<feature type="compositionally biased region" description="Basic and acidic residues" evidence="2">
    <location>
        <begin position="50"/>
        <end position="65"/>
    </location>
</feature>
<gene>
    <name evidence="1" type="primary">rpmI</name>
    <name type="ordered locus">Xfasm12_2097</name>
</gene>